<comment type="function">
    <text evidence="1">Binds to the 23S rRNA.</text>
</comment>
<comment type="similarity">
    <text evidence="1">Belongs to the bacterial ribosomal protein bL9 family.</text>
</comment>
<comment type="sequence caution" evidence="2">
    <conflict type="erroneous initiation">
        <sequence resource="EMBL-CDS" id="ABS77790"/>
    </conflict>
</comment>
<evidence type="ECO:0000255" key="1">
    <source>
        <dbReference type="HAMAP-Rule" id="MF_00503"/>
    </source>
</evidence>
<evidence type="ECO:0000305" key="2"/>
<organism>
    <name type="scientific">Coxiella burnetii (strain Dugway 5J108-111)</name>
    <dbReference type="NCBI Taxonomy" id="434922"/>
    <lineage>
        <taxon>Bacteria</taxon>
        <taxon>Pseudomonadati</taxon>
        <taxon>Pseudomonadota</taxon>
        <taxon>Gammaproteobacteria</taxon>
        <taxon>Legionellales</taxon>
        <taxon>Coxiellaceae</taxon>
        <taxon>Coxiella</taxon>
    </lineage>
</organism>
<accession>A9KFL8</accession>
<name>RL9_COXBN</name>
<reference key="1">
    <citation type="journal article" date="2009" name="Infect. Immun.">
        <title>Comparative genomics reveal extensive transposon-mediated genomic plasticity and diversity among potential effector proteins within the genus Coxiella.</title>
        <authorList>
            <person name="Beare P.A."/>
            <person name="Unsworth N."/>
            <person name="Andoh M."/>
            <person name="Voth D.E."/>
            <person name="Omsland A."/>
            <person name="Gilk S.D."/>
            <person name="Williams K.P."/>
            <person name="Sobral B.W."/>
            <person name="Kupko J.J. III"/>
            <person name="Porcella S.F."/>
            <person name="Samuel J.E."/>
            <person name="Heinzen R.A."/>
        </authorList>
    </citation>
    <scope>NUCLEOTIDE SEQUENCE [LARGE SCALE GENOMIC DNA]</scope>
    <source>
        <strain>Dugway 5J108-111</strain>
    </source>
</reference>
<feature type="chain" id="PRO_1000081474" description="Large ribosomal subunit protein bL9">
    <location>
        <begin position="1"/>
        <end position="152"/>
    </location>
</feature>
<protein>
    <recommendedName>
        <fullName evidence="1">Large ribosomal subunit protein bL9</fullName>
    </recommendedName>
    <alternativeName>
        <fullName evidence="2">50S ribosomal protein L9</fullName>
    </alternativeName>
</protein>
<gene>
    <name evidence="1" type="primary">rplI</name>
    <name type="ordered locus">CBUD_0930</name>
</gene>
<dbReference type="EMBL" id="CP000733">
    <property type="protein sequence ID" value="ABS77790.2"/>
    <property type="status" value="ALT_INIT"/>
    <property type="molecule type" value="Genomic_DNA"/>
</dbReference>
<dbReference type="RefSeq" id="WP_032138403.1">
    <property type="nucleotide sequence ID" value="NC_009727.1"/>
</dbReference>
<dbReference type="SMR" id="A9KFL8"/>
<dbReference type="KEGG" id="cbd:CBUD_0930"/>
<dbReference type="HOGENOM" id="CLU_078938_4_1_6"/>
<dbReference type="Proteomes" id="UP000008555">
    <property type="component" value="Chromosome"/>
</dbReference>
<dbReference type="GO" id="GO:1990904">
    <property type="term" value="C:ribonucleoprotein complex"/>
    <property type="evidence" value="ECO:0007669"/>
    <property type="project" value="UniProtKB-KW"/>
</dbReference>
<dbReference type="GO" id="GO:0005840">
    <property type="term" value="C:ribosome"/>
    <property type="evidence" value="ECO:0007669"/>
    <property type="project" value="UniProtKB-KW"/>
</dbReference>
<dbReference type="GO" id="GO:0019843">
    <property type="term" value="F:rRNA binding"/>
    <property type="evidence" value="ECO:0007669"/>
    <property type="project" value="UniProtKB-UniRule"/>
</dbReference>
<dbReference type="GO" id="GO:0003735">
    <property type="term" value="F:structural constituent of ribosome"/>
    <property type="evidence" value="ECO:0007669"/>
    <property type="project" value="InterPro"/>
</dbReference>
<dbReference type="GO" id="GO:0006412">
    <property type="term" value="P:translation"/>
    <property type="evidence" value="ECO:0007669"/>
    <property type="project" value="UniProtKB-UniRule"/>
</dbReference>
<dbReference type="Gene3D" id="3.10.430.100">
    <property type="entry name" value="Ribosomal protein L9, C-terminal domain"/>
    <property type="match status" value="1"/>
</dbReference>
<dbReference type="Gene3D" id="3.40.5.10">
    <property type="entry name" value="Ribosomal protein L9, N-terminal domain"/>
    <property type="match status" value="1"/>
</dbReference>
<dbReference type="HAMAP" id="MF_00503">
    <property type="entry name" value="Ribosomal_bL9"/>
    <property type="match status" value="1"/>
</dbReference>
<dbReference type="InterPro" id="IPR000244">
    <property type="entry name" value="Ribosomal_bL9"/>
</dbReference>
<dbReference type="InterPro" id="IPR009027">
    <property type="entry name" value="Ribosomal_bL9/RNase_H1_N"/>
</dbReference>
<dbReference type="InterPro" id="IPR020594">
    <property type="entry name" value="Ribosomal_bL9_bac/chp"/>
</dbReference>
<dbReference type="InterPro" id="IPR020069">
    <property type="entry name" value="Ribosomal_bL9_C"/>
</dbReference>
<dbReference type="InterPro" id="IPR036791">
    <property type="entry name" value="Ribosomal_bL9_C_sf"/>
</dbReference>
<dbReference type="InterPro" id="IPR020070">
    <property type="entry name" value="Ribosomal_bL9_N"/>
</dbReference>
<dbReference type="InterPro" id="IPR036935">
    <property type="entry name" value="Ribosomal_bL9_N_sf"/>
</dbReference>
<dbReference type="NCBIfam" id="TIGR00158">
    <property type="entry name" value="L9"/>
    <property type="match status" value="1"/>
</dbReference>
<dbReference type="PANTHER" id="PTHR21368">
    <property type="entry name" value="50S RIBOSOMAL PROTEIN L9"/>
    <property type="match status" value="1"/>
</dbReference>
<dbReference type="Pfam" id="PF03948">
    <property type="entry name" value="Ribosomal_L9_C"/>
    <property type="match status" value="1"/>
</dbReference>
<dbReference type="Pfam" id="PF01281">
    <property type="entry name" value="Ribosomal_L9_N"/>
    <property type="match status" value="1"/>
</dbReference>
<dbReference type="SUPFAM" id="SSF55658">
    <property type="entry name" value="L9 N-domain-like"/>
    <property type="match status" value="1"/>
</dbReference>
<dbReference type="SUPFAM" id="SSF55653">
    <property type="entry name" value="Ribosomal protein L9 C-domain"/>
    <property type="match status" value="1"/>
</dbReference>
<dbReference type="PROSITE" id="PS00651">
    <property type="entry name" value="RIBOSOMAL_L9"/>
    <property type="match status" value="1"/>
</dbReference>
<sequence length="152" mass="16622">MKLILQEKVANLGNIGDQVVVKPGYARNFLLPLGKAVPATPEHIAEFEKRRAELEKAAAELLAKAKARAKKLEDKTFKITANASDEGRLFGSIGPREIAQAITEAGIEIEKREVDLSQGPIRQVGEYEVPLRLHTDVSVNVKIEVAPENSNS</sequence>
<keyword id="KW-0687">Ribonucleoprotein</keyword>
<keyword id="KW-0689">Ribosomal protein</keyword>
<keyword id="KW-0694">RNA-binding</keyword>
<keyword id="KW-0699">rRNA-binding</keyword>
<proteinExistence type="inferred from homology"/>